<comment type="function">
    <text evidence="1">Catalyzes the reversible cyclization of carbamoyl aspartate to dihydroorotate.</text>
</comment>
<comment type="catalytic activity">
    <reaction evidence="1">
        <text>(S)-dihydroorotate + H2O = N-carbamoyl-L-aspartate + H(+)</text>
        <dbReference type="Rhea" id="RHEA:24296"/>
        <dbReference type="ChEBI" id="CHEBI:15377"/>
        <dbReference type="ChEBI" id="CHEBI:15378"/>
        <dbReference type="ChEBI" id="CHEBI:30864"/>
        <dbReference type="ChEBI" id="CHEBI:32814"/>
        <dbReference type="EC" id="3.5.2.3"/>
    </reaction>
</comment>
<comment type="cofactor">
    <cofactor evidence="1">
        <name>Zn(2+)</name>
        <dbReference type="ChEBI" id="CHEBI:29105"/>
    </cofactor>
    <text evidence="1">Binds 2 Zn(2+) ions per subunit.</text>
</comment>
<comment type="pathway">
    <text evidence="1">Pyrimidine metabolism; UMP biosynthesis via de novo pathway; (S)-dihydroorotate from bicarbonate: step 3/3.</text>
</comment>
<comment type="subunit">
    <text evidence="1">Homodimer.</text>
</comment>
<comment type="similarity">
    <text evidence="1">Belongs to the metallo-dependent hydrolases superfamily. DHOase family. Class II DHOase subfamily.</text>
</comment>
<feature type="chain" id="PRO_0000147214" description="Dihydroorotase">
    <location>
        <begin position="1"/>
        <end position="347"/>
    </location>
</feature>
<feature type="active site" evidence="1">
    <location>
        <position position="248"/>
    </location>
</feature>
<feature type="binding site" evidence="1">
    <location>
        <position position="14"/>
    </location>
    <ligand>
        <name>Zn(2+)</name>
        <dbReference type="ChEBI" id="CHEBI:29105"/>
        <label>1</label>
    </ligand>
</feature>
<feature type="binding site" evidence="1">
    <location>
        <begin position="16"/>
        <end position="18"/>
    </location>
    <ligand>
        <name>substrate</name>
    </ligand>
</feature>
<feature type="binding site" evidence="1">
    <location>
        <position position="16"/>
    </location>
    <ligand>
        <name>Zn(2+)</name>
        <dbReference type="ChEBI" id="CHEBI:29105"/>
        <label>1</label>
    </ligand>
</feature>
<feature type="binding site" evidence="1">
    <location>
        <position position="42"/>
    </location>
    <ligand>
        <name>substrate</name>
    </ligand>
</feature>
<feature type="binding site" description="via carbamate group" evidence="1">
    <location>
        <position position="100"/>
    </location>
    <ligand>
        <name>Zn(2+)</name>
        <dbReference type="ChEBI" id="CHEBI:29105"/>
        <label>1</label>
    </ligand>
</feature>
<feature type="binding site" description="via carbamate group" evidence="1">
    <location>
        <position position="100"/>
    </location>
    <ligand>
        <name>Zn(2+)</name>
        <dbReference type="ChEBI" id="CHEBI:29105"/>
        <label>2</label>
    </ligand>
</feature>
<feature type="binding site" evidence="1">
    <location>
        <position position="137"/>
    </location>
    <ligand>
        <name>substrate</name>
    </ligand>
</feature>
<feature type="binding site" evidence="1">
    <location>
        <position position="137"/>
    </location>
    <ligand>
        <name>Zn(2+)</name>
        <dbReference type="ChEBI" id="CHEBI:29105"/>
        <label>2</label>
    </ligand>
</feature>
<feature type="binding site" evidence="1">
    <location>
        <position position="175"/>
    </location>
    <ligand>
        <name>Zn(2+)</name>
        <dbReference type="ChEBI" id="CHEBI:29105"/>
        <label>2</label>
    </ligand>
</feature>
<feature type="binding site" evidence="1">
    <location>
        <position position="220"/>
    </location>
    <ligand>
        <name>substrate</name>
    </ligand>
</feature>
<feature type="binding site" evidence="1">
    <location>
        <position position="248"/>
    </location>
    <ligand>
        <name>Zn(2+)</name>
        <dbReference type="ChEBI" id="CHEBI:29105"/>
        <label>1</label>
    </ligand>
</feature>
<feature type="binding site" evidence="1">
    <location>
        <position position="252"/>
    </location>
    <ligand>
        <name>substrate</name>
    </ligand>
</feature>
<feature type="binding site" evidence="1">
    <location>
        <position position="264"/>
    </location>
    <ligand>
        <name>substrate</name>
    </ligand>
</feature>
<feature type="modified residue" description="N6-carboxylysine" evidence="1">
    <location>
        <position position="100"/>
    </location>
</feature>
<protein>
    <recommendedName>
        <fullName evidence="1">Dihydroorotase</fullName>
        <shortName evidence="1">DHOase</shortName>
        <ecNumber evidence="1">3.5.2.3</ecNumber>
    </recommendedName>
</protein>
<gene>
    <name evidence="1" type="primary">pyrC</name>
    <name type="ordered locus">PSPTO_4157</name>
</gene>
<evidence type="ECO:0000255" key="1">
    <source>
        <dbReference type="HAMAP-Rule" id="MF_00219"/>
    </source>
</evidence>
<sequence>MSDRLTLLRPDDWHIHLRDGAVLPHTVADVARTFGRAIIMPNLVPPVRNAQQADAYRQRILAARPAGSRFEPLMVLYLTDQTTPEDIRTAKASGFVHAAKLYPAGATTNSDSGVTSIDKIFPALEAMAEVGMLLLVHGEVTRGEIDVFDREKVFIDEHLRRVVERFPTLKVVFEHITTGDAVQFVNEASANVAATITAHHLLYNRNHMLVGGIRPHFYCLPILKRNTHQVALLDAATSGSGKFFLGTDSAPHAQHAKENACGCAGCYTAYAAIELYAEAFEQRNALDKLEGFASLHGPAFYGLPANQDTITLVRDEWTAPTSLPFGELTVIPLRAGETLRWRLEEHA</sequence>
<keyword id="KW-0378">Hydrolase</keyword>
<keyword id="KW-0479">Metal-binding</keyword>
<keyword id="KW-0665">Pyrimidine biosynthesis</keyword>
<keyword id="KW-1185">Reference proteome</keyword>
<keyword id="KW-0862">Zinc</keyword>
<name>PYRC_PSESM</name>
<reference key="1">
    <citation type="journal article" date="2003" name="Proc. Natl. Acad. Sci. U.S.A.">
        <title>The complete genome sequence of the Arabidopsis and tomato pathogen Pseudomonas syringae pv. tomato DC3000.</title>
        <authorList>
            <person name="Buell C.R."/>
            <person name="Joardar V."/>
            <person name="Lindeberg M."/>
            <person name="Selengut J."/>
            <person name="Paulsen I.T."/>
            <person name="Gwinn M.L."/>
            <person name="Dodson R.J."/>
            <person name="DeBoy R.T."/>
            <person name="Durkin A.S."/>
            <person name="Kolonay J.F."/>
            <person name="Madupu R."/>
            <person name="Daugherty S.C."/>
            <person name="Brinkac L.M."/>
            <person name="Beanan M.J."/>
            <person name="Haft D.H."/>
            <person name="Nelson W.C."/>
            <person name="Davidsen T.M."/>
            <person name="Zafar N."/>
            <person name="Zhou L."/>
            <person name="Liu J."/>
            <person name="Yuan Q."/>
            <person name="Khouri H.M."/>
            <person name="Fedorova N.B."/>
            <person name="Tran B."/>
            <person name="Russell D."/>
            <person name="Berry K.J."/>
            <person name="Utterback T.R."/>
            <person name="Van Aken S.E."/>
            <person name="Feldblyum T.V."/>
            <person name="D'Ascenzo M."/>
            <person name="Deng W.-L."/>
            <person name="Ramos A.R."/>
            <person name="Alfano J.R."/>
            <person name="Cartinhour S."/>
            <person name="Chatterjee A.K."/>
            <person name="Delaney T.P."/>
            <person name="Lazarowitz S.G."/>
            <person name="Martin G.B."/>
            <person name="Schneider D.J."/>
            <person name="Tang X."/>
            <person name="Bender C.L."/>
            <person name="White O."/>
            <person name="Fraser C.M."/>
            <person name="Collmer A."/>
        </authorList>
    </citation>
    <scope>NUCLEOTIDE SEQUENCE [LARGE SCALE GENOMIC DNA]</scope>
    <source>
        <strain>ATCC BAA-871 / DC3000</strain>
    </source>
</reference>
<proteinExistence type="inferred from homology"/>
<organism>
    <name type="scientific">Pseudomonas syringae pv. tomato (strain ATCC BAA-871 / DC3000)</name>
    <dbReference type="NCBI Taxonomy" id="223283"/>
    <lineage>
        <taxon>Bacteria</taxon>
        <taxon>Pseudomonadati</taxon>
        <taxon>Pseudomonadota</taxon>
        <taxon>Gammaproteobacteria</taxon>
        <taxon>Pseudomonadales</taxon>
        <taxon>Pseudomonadaceae</taxon>
        <taxon>Pseudomonas</taxon>
    </lineage>
</organism>
<accession>Q87XM1</accession>
<dbReference type="EC" id="3.5.2.3" evidence="1"/>
<dbReference type="EMBL" id="AE016853">
    <property type="protein sequence ID" value="AAO57613.1"/>
    <property type="molecule type" value="Genomic_DNA"/>
</dbReference>
<dbReference type="RefSeq" id="NP_793918.1">
    <property type="nucleotide sequence ID" value="NC_004578.1"/>
</dbReference>
<dbReference type="RefSeq" id="WP_005764852.1">
    <property type="nucleotide sequence ID" value="NC_004578.1"/>
</dbReference>
<dbReference type="SMR" id="Q87XM1"/>
<dbReference type="STRING" id="223283.PSPTO_4157"/>
<dbReference type="MEROPS" id="M38.A02"/>
<dbReference type="GeneID" id="1185837"/>
<dbReference type="KEGG" id="pst:PSPTO_4157"/>
<dbReference type="PATRIC" id="fig|223283.9.peg.4267"/>
<dbReference type="eggNOG" id="COG0418">
    <property type="taxonomic scope" value="Bacteria"/>
</dbReference>
<dbReference type="HOGENOM" id="CLU_041558_1_0_6"/>
<dbReference type="OrthoDB" id="9808095at2"/>
<dbReference type="PhylomeDB" id="Q87XM1"/>
<dbReference type="UniPathway" id="UPA00070">
    <property type="reaction ID" value="UER00117"/>
</dbReference>
<dbReference type="Proteomes" id="UP000002515">
    <property type="component" value="Chromosome"/>
</dbReference>
<dbReference type="GO" id="GO:0005829">
    <property type="term" value="C:cytosol"/>
    <property type="evidence" value="ECO:0007669"/>
    <property type="project" value="TreeGrafter"/>
</dbReference>
<dbReference type="GO" id="GO:0004151">
    <property type="term" value="F:dihydroorotase activity"/>
    <property type="evidence" value="ECO:0007669"/>
    <property type="project" value="UniProtKB-UniRule"/>
</dbReference>
<dbReference type="GO" id="GO:0008270">
    <property type="term" value="F:zinc ion binding"/>
    <property type="evidence" value="ECO:0007669"/>
    <property type="project" value="UniProtKB-UniRule"/>
</dbReference>
<dbReference type="GO" id="GO:0006207">
    <property type="term" value="P:'de novo' pyrimidine nucleobase biosynthetic process"/>
    <property type="evidence" value="ECO:0007669"/>
    <property type="project" value="TreeGrafter"/>
</dbReference>
<dbReference type="GO" id="GO:0044205">
    <property type="term" value="P:'de novo' UMP biosynthetic process"/>
    <property type="evidence" value="ECO:0007669"/>
    <property type="project" value="UniProtKB-UniRule"/>
</dbReference>
<dbReference type="CDD" id="cd01294">
    <property type="entry name" value="DHOase"/>
    <property type="match status" value="1"/>
</dbReference>
<dbReference type="FunFam" id="3.20.20.140:FF:000006">
    <property type="entry name" value="Dihydroorotase"/>
    <property type="match status" value="1"/>
</dbReference>
<dbReference type="Gene3D" id="3.20.20.140">
    <property type="entry name" value="Metal-dependent hydrolases"/>
    <property type="match status" value="1"/>
</dbReference>
<dbReference type="HAMAP" id="MF_00219">
    <property type="entry name" value="PyrC_classII"/>
    <property type="match status" value="1"/>
</dbReference>
<dbReference type="InterPro" id="IPR006680">
    <property type="entry name" value="Amidohydro-rel"/>
</dbReference>
<dbReference type="InterPro" id="IPR004721">
    <property type="entry name" value="DHOdimr"/>
</dbReference>
<dbReference type="InterPro" id="IPR002195">
    <property type="entry name" value="Dihydroorotase_CS"/>
</dbReference>
<dbReference type="InterPro" id="IPR032466">
    <property type="entry name" value="Metal_Hydrolase"/>
</dbReference>
<dbReference type="NCBIfam" id="TIGR00856">
    <property type="entry name" value="pyrC_dimer"/>
    <property type="match status" value="1"/>
</dbReference>
<dbReference type="PANTHER" id="PTHR43137">
    <property type="entry name" value="DIHYDROOROTASE"/>
    <property type="match status" value="1"/>
</dbReference>
<dbReference type="PANTHER" id="PTHR43137:SF1">
    <property type="entry name" value="DIHYDROOROTASE"/>
    <property type="match status" value="1"/>
</dbReference>
<dbReference type="Pfam" id="PF01979">
    <property type="entry name" value="Amidohydro_1"/>
    <property type="match status" value="1"/>
</dbReference>
<dbReference type="PIRSF" id="PIRSF001237">
    <property type="entry name" value="DHOdimr"/>
    <property type="match status" value="1"/>
</dbReference>
<dbReference type="SUPFAM" id="SSF51556">
    <property type="entry name" value="Metallo-dependent hydrolases"/>
    <property type="match status" value="1"/>
</dbReference>
<dbReference type="PROSITE" id="PS00482">
    <property type="entry name" value="DIHYDROOROTASE_1"/>
    <property type="match status" value="1"/>
</dbReference>
<dbReference type="PROSITE" id="PS00483">
    <property type="entry name" value="DIHYDROOROTASE_2"/>
    <property type="match status" value="1"/>
</dbReference>